<feature type="chain" id="PRO_1000188091" description="Small ribosomal subunit biogenesis GTPase RsgA">
    <location>
        <begin position="1"/>
        <end position="296"/>
    </location>
</feature>
<feature type="domain" description="CP-type G" evidence="2">
    <location>
        <begin position="63"/>
        <end position="224"/>
    </location>
</feature>
<feature type="binding site" evidence="1">
    <location>
        <begin position="112"/>
        <end position="115"/>
    </location>
    <ligand>
        <name>GTP</name>
        <dbReference type="ChEBI" id="CHEBI:37565"/>
    </ligand>
</feature>
<feature type="binding site" evidence="1">
    <location>
        <begin position="167"/>
        <end position="175"/>
    </location>
    <ligand>
        <name>GTP</name>
        <dbReference type="ChEBI" id="CHEBI:37565"/>
    </ligand>
</feature>
<feature type="binding site" evidence="1">
    <location>
        <position position="248"/>
    </location>
    <ligand>
        <name>Zn(2+)</name>
        <dbReference type="ChEBI" id="CHEBI:29105"/>
    </ligand>
</feature>
<feature type="binding site" evidence="1">
    <location>
        <position position="253"/>
    </location>
    <ligand>
        <name>Zn(2+)</name>
        <dbReference type="ChEBI" id="CHEBI:29105"/>
    </ligand>
</feature>
<feature type="binding site" evidence="1">
    <location>
        <position position="255"/>
    </location>
    <ligand>
        <name>Zn(2+)</name>
        <dbReference type="ChEBI" id="CHEBI:29105"/>
    </ligand>
</feature>
<feature type="binding site" evidence="1">
    <location>
        <position position="261"/>
    </location>
    <ligand>
        <name>Zn(2+)</name>
        <dbReference type="ChEBI" id="CHEBI:29105"/>
    </ligand>
</feature>
<proteinExistence type="inferred from homology"/>
<evidence type="ECO:0000255" key="1">
    <source>
        <dbReference type="HAMAP-Rule" id="MF_01820"/>
    </source>
</evidence>
<evidence type="ECO:0000255" key="2">
    <source>
        <dbReference type="PROSITE-ProRule" id="PRU01058"/>
    </source>
</evidence>
<comment type="function">
    <text evidence="1">One of several proteins that assist in the late maturation steps of the functional core of the 30S ribosomal subunit. Helps release RbfA from mature subunits. May play a role in the assembly of ribosomal proteins into the subunit. Circularly permuted GTPase that catalyzes slow GTP hydrolysis, GTPase activity is stimulated by the 30S ribosomal subunit.</text>
</comment>
<comment type="cofactor">
    <cofactor evidence="1">
        <name>Zn(2+)</name>
        <dbReference type="ChEBI" id="CHEBI:29105"/>
    </cofactor>
    <text evidence="1">Binds 1 zinc ion per subunit.</text>
</comment>
<comment type="subunit">
    <text evidence="1">Monomer. Associates with 30S ribosomal subunit, binds 16S rRNA.</text>
</comment>
<comment type="subcellular location">
    <subcellularLocation>
        <location evidence="1">Cytoplasm</location>
    </subcellularLocation>
</comment>
<comment type="similarity">
    <text evidence="1">Belongs to the TRAFAC class YlqF/YawG GTPase family. RsgA subfamily.</text>
</comment>
<reference key="1">
    <citation type="journal article" date="2008" name="DNA Res.">
        <title>Comparative genome analysis of Lactobacillus reuteri and Lactobacillus fermentum reveal a genomic island for reuterin and cobalamin production.</title>
        <authorList>
            <person name="Morita H."/>
            <person name="Toh H."/>
            <person name="Fukuda S."/>
            <person name="Horikawa H."/>
            <person name="Oshima K."/>
            <person name="Suzuki T."/>
            <person name="Murakami M."/>
            <person name="Hisamatsu S."/>
            <person name="Kato Y."/>
            <person name="Takizawa T."/>
            <person name="Fukuoka H."/>
            <person name="Yoshimura T."/>
            <person name="Itoh K."/>
            <person name="O'Sullivan D.J."/>
            <person name="McKay L.L."/>
            <person name="Ohno H."/>
            <person name="Kikuchi J."/>
            <person name="Masaoka T."/>
            <person name="Hattori M."/>
        </authorList>
    </citation>
    <scope>NUCLEOTIDE SEQUENCE [LARGE SCALE GENOMIC DNA]</scope>
    <source>
        <strain>NBRC 3956 / LMG 18251</strain>
    </source>
</reference>
<gene>
    <name evidence="1" type="primary">rsgA</name>
    <name type="ordered locus">LAF_1247</name>
</gene>
<protein>
    <recommendedName>
        <fullName evidence="1">Small ribosomal subunit biogenesis GTPase RsgA</fullName>
        <ecNumber evidence="1">3.6.1.-</ecNumber>
    </recommendedName>
</protein>
<organism>
    <name type="scientific">Limosilactobacillus fermentum (strain NBRC 3956 / LMG 18251)</name>
    <name type="common">Lactobacillus fermentum</name>
    <dbReference type="NCBI Taxonomy" id="334390"/>
    <lineage>
        <taxon>Bacteria</taxon>
        <taxon>Bacillati</taxon>
        <taxon>Bacillota</taxon>
        <taxon>Bacilli</taxon>
        <taxon>Lactobacillales</taxon>
        <taxon>Lactobacillaceae</taxon>
        <taxon>Limosilactobacillus</taxon>
    </lineage>
</organism>
<keyword id="KW-0963">Cytoplasm</keyword>
<keyword id="KW-0342">GTP-binding</keyword>
<keyword id="KW-0378">Hydrolase</keyword>
<keyword id="KW-0479">Metal-binding</keyword>
<keyword id="KW-0547">Nucleotide-binding</keyword>
<keyword id="KW-1185">Reference proteome</keyword>
<keyword id="KW-0690">Ribosome biogenesis</keyword>
<keyword id="KW-0694">RNA-binding</keyword>
<keyword id="KW-0699">rRNA-binding</keyword>
<keyword id="KW-0862">Zinc</keyword>
<sequence length="296" mass="33202">MKNGTIQQSLSGFYDIWSGGKLYRTRARGNFRKRGLKPVVGDQVEFEAENQREGYLLKILPRKNQLVRPMVANVDLAVVVTAVKEPNLSTNLLDRQLVALESQGIDPVIYFSKTDLLSDQEADALMLVVKGYQMIGYPVLYQRPPFGEEALGELRKILTGKVVTMMGQTGAGKSTLLNHLAPDLNLATGEISQALKRGRHTTRKVSLMQVGDALIADTPGFSSYEDFQMTVEELPHFFPEMQALAPECKFRGCLHIKEPSCAVKNALKHGKIMNSRYDNYLQFHELIANQKPNYQK</sequence>
<name>RSGA_LIMF3</name>
<dbReference type="EC" id="3.6.1.-" evidence="1"/>
<dbReference type="EMBL" id="AP008937">
    <property type="protein sequence ID" value="BAG27583.1"/>
    <property type="molecule type" value="Genomic_DNA"/>
</dbReference>
<dbReference type="RefSeq" id="WP_012391448.1">
    <property type="nucleotide sequence ID" value="NC_010610.1"/>
</dbReference>
<dbReference type="SMR" id="B2GD51"/>
<dbReference type="KEGG" id="lfe:LAF_1247"/>
<dbReference type="PATRIC" id="fig|334390.5.peg.1370"/>
<dbReference type="eggNOG" id="COG1162">
    <property type="taxonomic scope" value="Bacteria"/>
</dbReference>
<dbReference type="HOGENOM" id="CLU_033617_2_1_9"/>
<dbReference type="Proteomes" id="UP000001697">
    <property type="component" value="Chromosome"/>
</dbReference>
<dbReference type="GO" id="GO:0005737">
    <property type="term" value="C:cytoplasm"/>
    <property type="evidence" value="ECO:0007669"/>
    <property type="project" value="UniProtKB-SubCell"/>
</dbReference>
<dbReference type="GO" id="GO:0005525">
    <property type="term" value="F:GTP binding"/>
    <property type="evidence" value="ECO:0007669"/>
    <property type="project" value="UniProtKB-UniRule"/>
</dbReference>
<dbReference type="GO" id="GO:0003924">
    <property type="term" value="F:GTPase activity"/>
    <property type="evidence" value="ECO:0007669"/>
    <property type="project" value="UniProtKB-UniRule"/>
</dbReference>
<dbReference type="GO" id="GO:0046872">
    <property type="term" value="F:metal ion binding"/>
    <property type="evidence" value="ECO:0007669"/>
    <property type="project" value="UniProtKB-KW"/>
</dbReference>
<dbReference type="GO" id="GO:0019843">
    <property type="term" value="F:rRNA binding"/>
    <property type="evidence" value="ECO:0007669"/>
    <property type="project" value="UniProtKB-KW"/>
</dbReference>
<dbReference type="GO" id="GO:0042274">
    <property type="term" value="P:ribosomal small subunit biogenesis"/>
    <property type="evidence" value="ECO:0007669"/>
    <property type="project" value="UniProtKB-UniRule"/>
</dbReference>
<dbReference type="CDD" id="cd04466">
    <property type="entry name" value="S1_YloQ_GTPase"/>
    <property type="match status" value="1"/>
</dbReference>
<dbReference type="CDD" id="cd01854">
    <property type="entry name" value="YjeQ_EngC"/>
    <property type="match status" value="1"/>
</dbReference>
<dbReference type="Gene3D" id="2.40.50.140">
    <property type="entry name" value="Nucleic acid-binding proteins"/>
    <property type="match status" value="1"/>
</dbReference>
<dbReference type="Gene3D" id="3.40.50.300">
    <property type="entry name" value="P-loop containing nucleotide triphosphate hydrolases"/>
    <property type="match status" value="1"/>
</dbReference>
<dbReference type="Gene3D" id="1.10.40.50">
    <property type="entry name" value="Probable gtpase engc, domain 3"/>
    <property type="match status" value="1"/>
</dbReference>
<dbReference type="HAMAP" id="MF_01820">
    <property type="entry name" value="GTPase_RsgA"/>
    <property type="match status" value="1"/>
</dbReference>
<dbReference type="InterPro" id="IPR030378">
    <property type="entry name" value="G_CP_dom"/>
</dbReference>
<dbReference type="InterPro" id="IPR012340">
    <property type="entry name" value="NA-bd_OB-fold"/>
</dbReference>
<dbReference type="InterPro" id="IPR027417">
    <property type="entry name" value="P-loop_NTPase"/>
</dbReference>
<dbReference type="InterPro" id="IPR004881">
    <property type="entry name" value="Ribosome_biogen_GTPase_RsgA"/>
</dbReference>
<dbReference type="InterPro" id="IPR010914">
    <property type="entry name" value="RsgA_GTPase_dom"/>
</dbReference>
<dbReference type="InterPro" id="IPR031944">
    <property type="entry name" value="RsgA_N"/>
</dbReference>
<dbReference type="NCBIfam" id="TIGR00157">
    <property type="entry name" value="ribosome small subunit-dependent GTPase A"/>
    <property type="match status" value="1"/>
</dbReference>
<dbReference type="PANTHER" id="PTHR32120">
    <property type="entry name" value="SMALL RIBOSOMAL SUBUNIT BIOGENESIS GTPASE RSGA"/>
    <property type="match status" value="1"/>
</dbReference>
<dbReference type="PANTHER" id="PTHR32120:SF11">
    <property type="entry name" value="SMALL RIBOSOMAL SUBUNIT BIOGENESIS GTPASE RSGA 1, MITOCHONDRIAL-RELATED"/>
    <property type="match status" value="1"/>
</dbReference>
<dbReference type="Pfam" id="PF03193">
    <property type="entry name" value="RsgA_GTPase"/>
    <property type="match status" value="1"/>
</dbReference>
<dbReference type="Pfam" id="PF16745">
    <property type="entry name" value="RsgA_N"/>
    <property type="match status" value="1"/>
</dbReference>
<dbReference type="SUPFAM" id="SSF50249">
    <property type="entry name" value="Nucleic acid-binding proteins"/>
    <property type="match status" value="1"/>
</dbReference>
<dbReference type="SUPFAM" id="SSF52540">
    <property type="entry name" value="P-loop containing nucleoside triphosphate hydrolases"/>
    <property type="match status" value="1"/>
</dbReference>
<dbReference type="PROSITE" id="PS50936">
    <property type="entry name" value="ENGC_GTPASE"/>
    <property type="match status" value="1"/>
</dbReference>
<dbReference type="PROSITE" id="PS51721">
    <property type="entry name" value="G_CP"/>
    <property type="match status" value="1"/>
</dbReference>
<accession>B2GD51</accession>